<sequence length="156" mass="17692">MRRRKAPVREVLPDPIYGNKVITKFINSLMYDGKKSTATTIMYGALEAIDKKGGEKKGIDIFNDAIENIKPLLEVKSRRVGGATYQVPVEVRPARQQALAIRWIISFARKRSERTMIDKLAAELLDAANSKGASFKKKEDTYKMAEANKAFAHYRW</sequence>
<organism>
    <name type="scientific">Campylobacter jejuni subsp. jejuni serotype O:2 (strain ATCC 700819 / NCTC 11168)</name>
    <dbReference type="NCBI Taxonomy" id="192222"/>
    <lineage>
        <taxon>Bacteria</taxon>
        <taxon>Pseudomonadati</taxon>
        <taxon>Campylobacterota</taxon>
        <taxon>Epsilonproteobacteria</taxon>
        <taxon>Campylobacterales</taxon>
        <taxon>Campylobacteraceae</taxon>
        <taxon>Campylobacter</taxon>
    </lineage>
</organism>
<evidence type="ECO:0000255" key="1">
    <source>
        <dbReference type="HAMAP-Rule" id="MF_00480"/>
    </source>
</evidence>
<evidence type="ECO:0000305" key="2"/>
<proteinExistence type="inferred from homology"/>
<name>RS7_CAMJE</name>
<feature type="chain" id="PRO_0000124238" description="Small ribosomal subunit protein uS7">
    <location>
        <begin position="1"/>
        <end position="156"/>
    </location>
</feature>
<accession>Q9PI17</accession>
<accession>Q0PB21</accession>
<keyword id="KW-1185">Reference proteome</keyword>
<keyword id="KW-0687">Ribonucleoprotein</keyword>
<keyword id="KW-0689">Ribosomal protein</keyword>
<keyword id="KW-0694">RNA-binding</keyword>
<keyword id="KW-0699">rRNA-binding</keyword>
<keyword id="KW-0820">tRNA-binding</keyword>
<protein>
    <recommendedName>
        <fullName evidence="1">Small ribosomal subunit protein uS7</fullName>
    </recommendedName>
    <alternativeName>
        <fullName evidence="2">30S ribosomal protein S7</fullName>
    </alternativeName>
</protein>
<dbReference type="EMBL" id="AL111168">
    <property type="protein sequence ID" value="CAL34640.1"/>
    <property type="molecule type" value="Genomic_DNA"/>
</dbReference>
<dbReference type="PIR" id="G81394">
    <property type="entry name" value="G81394"/>
</dbReference>
<dbReference type="RefSeq" id="WP_002779471.1">
    <property type="nucleotide sequence ID" value="NZ_SZUC01000002.1"/>
</dbReference>
<dbReference type="RefSeq" id="YP_002343926.1">
    <property type="nucleotide sequence ID" value="NC_002163.1"/>
</dbReference>
<dbReference type="SMR" id="Q9PI17"/>
<dbReference type="IntAct" id="Q9PI17">
    <property type="interactions" value="14"/>
</dbReference>
<dbReference type="STRING" id="192222.Cj0492"/>
<dbReference type="PaxDb" id="192222-Cj0492"/>
<dbReference type="EnsemblBacteria" id="CAL34640">
    <property type="protein sequence ID" value="CAL34640"/>
    <property type="gene ID" value="Cj0492"/>
</dbReference>
<dbReference type="GeneID" id="904819"/>
<dbReference type="KEGG" id="cje:Cj0492"/>
<dbReference type="PATRIC" id="fig|192222.6.peg.484"/>
<dbReference type="eggNOG" id="COG0049">
    <property type="taxonomic scope" value="Bacteria"/>
</dbReference>
<dbReference type="HOGENOM" id="CLU_072226_1_1_7"/>
<dbReference type="OrthoDB" id="9807653at2"/>
<dbReference type="PRO" id="PR:Q9PI17"/>
<dbReference type="Proteomes" id="UP000000799">
    <property type="component" value="Chromosome"/>
</dbReference>
<dbReference type="GO" id="GO:0015935">
    <property type="term" value="C:small ribosomal subunit"/>
    <property type="evidence" value="ECO:0007669"/>
    <property type="project" value="InterPro"/>
</dbReference>
<dbReference type="GO" id="GO:0019843">
    <property type="term" value="F:rRNA binding"/>
    <property type="evidence" value="ECO:0007669"/>
    <property type="project" value="UniProtKB-UniRule"/>
</dbReference>
<dbReference type="GO" id="GO:0003735">
    <property type="term" value="F:structural constituent of ribosome"/>
    <property type="evidence" value="ECO:0007669"/>
    <property type="project" value="InterPro"/>
</dbReference>
<dbReference type="GO" id="GO:0000049">
    <property type="term" value="F:tRNA binding"/>
    <property type="evidence" value="ECO:0007669"/>
    <property type="project" value="UniProtKB-UniRule"/>
</dbReference>
<dbReference type="GO" id="GO:0006412">
    <property type="term" value="P:translation"/>
    <property type="evidence" value="ECO:0007669"/>
    <property type="project" value="UniProtKB-UniRule"/>
</dbReference>
<dbReference type="CDD" id="cd14869">
    <property type="entry name" value="uS7_Bacteria"/>
    <property type="match status" value="1"/>
</dbReference>
<dbReference type="FunFam" id="1.10.455.10:FF:000001">
    <property type="entry name" value="30S ribosomal protein S7"/>
    <property type="match status" value="1"/>
</dbReference>
<dbReference type="Gene3D" id="1.10.455.10">
    <property type="entry name" value="Ribosomal protein S7 domain"/>
    <property type="match status" value="1"/>
</dbReference>
<dbReference type="HAMAP" id="MF_00480_B">
    <property type="entry name" value="Ribosomal_uS7_B"/>
    <property type="match status" value="1"/>
</dbReference>
<dbReference type="InterPro" id="IPR000235">
    <property type="entry name" value="Ribosomal_uS7"/>
</dbReference>
<dbReference type="InterPro" id="IPR005717">
    <property type="entry name" value="Ribosomal_uS7_bac/org-type"/>
</dbReference>
<dbReference type="InterPro" id="IPR020606">
    <property type="entry name" value="Ribosomal_uS7_CS"/>
</dbReference>
<dbReference type="InterPro" id="IPR023798">
    <property type="entry name" value="Ribosomal_uS7_dom"/>
</dbReference>
<dbReference type="InterPro" id="IPR036823">
    <property type="entry name" value="Ribosomal_uS7_dom_sf"/>
</dbReference>
<dbReference type="NCBIfam" id="TIGR01029">
    <property type="entry name" value="rpsG_bact"/>
    <property type="match status" value="1"/>
</dbReference>
<dbReference type="PANTHER" id="PTHR11205">
    <property type="entry name" value="RIBOSOMAL PROTEIN S7"/>
    <property type="match status" value="1"/>
</dbReference>
<dbReference type="Pfam" id="PF00177">
    <property type="entry name" value="Ribosomal_S7"/>
    <property type="match status" value="1"/>
</dbReference>
<dbReference type="PIRSF" id="PIRSF002122">
    <property type="entry name" value="RPS7p_RPS7a_RPS5e_RPS7o"/>
    <property type="match status" value="1"/>
</dbReference>
<dbReference type="SUPFAM" id="SSF47973">
    <property type="entry name" value="Ribosomal protein S7"/>
    <property type="match status" value="1"/>
</dbReference>
<dbReference type="PROSITE" id="PS00052">
    <property type="entry name" value="RIBOSOMAL_S7"/>
    <property type="match status" value="1"/>
</dbReference>
<comment type="function">
    <text evidence="1">One of the primary rRNA binding proteins, it binds directly to 16S rRNA where it nucleates assembly of the head domain of the 30S subunit. Is located at the subunit interface close to the decoding center, probably blocks exit of the E-site tRNA.</text>
</comment>
<comment type="subunit">
    <text evidence="1">Part of the 30S ribosomal subunit. Contacts proteins S9 and S11.</text>
</comment>
<comment type="similarity">
    <text evidence="1">Belongs to the universal ribosomal protein uS7 family.</text>
</comment>
<reference key="1">
    <citation type="journal article" date="2000" name="Nature">
        <title>The genome sequence of the food-borne pathogen Campylobacter jejuni reveals hypervariable sequences.</title>
        <authorList>
            <person name="Parkhill J."/>
            <person name="Wren B.W."/>
            <person name="Mungall K.L."/>
            <person name="Ketley J.M."/>
            <person name="Churcher C.M."/>
            <person name="Basham D."/>
            <person name="Chillingworth T."/>
            <person name="Davies R.M."/>
            <person name="Feltwell T."/>
            <person name="Holroyd S."/>
            <person name="Jagels K."/>
            <person name="Karlyshev A.V."/>
            <person name="Moule S."/>
            <person name="Pallen M.J."/>
            <person name="Penn C.W."/>
            <person name="Quail M.A."/>
            <person name="Rajandream M.A."/>
            <person name="Rutherford K.M."/>
            <person name="van Vliet A.H.M."/>
            <person name="Whitehead S."/>
            <person name="Barrell B.G."/>
        </authorList>
    </citation>
    <scope>NUCLEOTIDE SEQUENCE [LARGE SCALE GENOMIC DNA]</scope>
    <source>
        <strain>ATCC 700819 / NCTC 11168</strain>
    </source>
</reference>
<gene>
    <name evidence="1" type="primary">rpsG</name>
    <name type="ordered locus">Cj0492</name>
</gene>